<sequence length="143" mass="17238">MFMGEYDHQLDTKGRMIIPSKFRYDLNERFIITRGLDKCLFGYTLDEWQQIEEKMKTLPMTKKDARKFMRMFFSGAVEVELDKQGRINIPQNLRKYANLTKECTVIGVSNRIEIWDRETWNDFYEESEESFEDIAEDLIDFDF</sequence>
<organism>
    <name type="scientific">Staphylococcus aureus (strain NCTC 8325 / PS 47)</name>
    <dbReference type="NCBI Taxonomy" id="93061"/>
    <lineage>
        <taxon>Bacteria</taxon>
        <taxon>Bacillati</taxon>
        <taxon>Bacillota</taxon>
        <taxon>Bacilli</taxon>
        <taxon>Bacillales</taxon>
        <taxon>Staphylococcaceae</taxon>
        <taxon>Staphylococcus</taxon>
    </lineage>
</organism>
<proteinExistence type="inferred from homology"/>
<dbReference type="EMBL" id="CP000253">
    <property type="protein sequence ID" value="ABD30252.1"/>
    <property type="molecule type" value="Genomic_DNA"/>
</dbReference>
<dbReference type="RefSeq" id="WP_000480800.1">
    <property type="nucleotide sequence ID" value="NZ_LS483365.1"/>
</dbReference>
<dbReference type="RefSeq" id="YP_499684.1">
    <property type="nucleotide sequence ID" value="NC_007795.1"/>
</dbReference>
<dbReference type="SMR" id="Q2FZ97"/>
<dbReference type="STRING" id="93061.SAOUHSC_01142"/>
<dbReference type="PaxDb" id="1280-SAXN108_1176"/>
<dbReference type="GeneID" id="3920702"/>
<dbReference type="GeneID" id="66839371"/>
<dbReference type="KEGG" id="sao:SAOUHSC_01142"/>
<dbReference type="PATRIC" id="fig|93061.5.peg.1047"/>
<dbReference type="eggNOG" id="COG2001">
    <property type="taxonomic scope" value="Bacteria"/>
</dbReference>
<dbReference type="HOGENOM" id="CLU_107907_0_5_9"/>
<dbReference type="OrthoDB" id="9807753at2"/>
<dbReference type="PHI-base" id="PHI:11799"/>
<dbReference type="PRO" id="PR:Q2FZ97"/>
<dbReference type="Proteomes" id="UP000008816">
    <property type="component" value="Chromosome"/>
</dbReference>
<dbReference type="GO" id="GO:0005737">
    <property type="term" value="C:cytoplasm"/>
    <property type="evidence" value="ECO:0007669"/>
    <property type="project" value="UniProtKB-UniRule"/>
</dbReference>
<dbReference type="GO" id="GO:0009295">
    <property type="term" value="C:nucleoid"/>
    <property type="evidence" value="ECO:0007669"/>
    <property type="project" value="UniProtKB-SubCell"/>
</dbReference>
<dbReference type="GO" id="GO:0003700">
    <property type="term" value="F:DNA-binding transcription factor activity"/>
    <property type="evidence" value="ECO:0000318"/>
    <property type="project" value="GO_Central"/>
</dbReference>
<dbReference type="GO" id="GO:0000976">
    <property type="term" value="F:transcription cis-regulatory region binding"/>
    <property type="evidence" value="ECO:0000318"/>
    <property type="project" value="GO_Central"/>
</dbReference>
<dbReference type="GO" id="GO:2000143">
    <property type="term" value="P:negative regulation of DNA-templated transcription initiation"/>
    <property type="evidence" value="ECO:0000318"/>
    <property type="project" value="GO_Central"/>
</dbReference>
<dbReference type="CDD" id="cd16321">
    <property type="entry name" value="MraZ_C"/>
    <property type="match status" value="1"/>
</dbReference>
<dbReference type="CDD" id="cd16320">
    <property type="entry name" value="MraZ_N"/>
    <property type="match status" value="1"/>
</dbReference>
<dbReference type="FunFam" id="3.40.1550.20:FF:000002">
    <property type="entry name" value="Transcriptional regulator MraZ"/>
    <property type="match status" value="1"/>
</dbReference>
<dbReference type="Gene3D" id="3.40.1550.20">
    <property type="entry name" value="Transcriptional regulator MraZ domain"/>
    <property type="match status" value="1"/>
</dbReference>
<dbReference type="HAMAP" id="MF_01008">
    <property type="entry name" value="MraZ"/>
    <property type="match status" value="1"/>
</dbReference>
<dbReference type="InterPro" id="IPR003444">
    <property type="entry name" value="MraZ"/>
</dbReference>
<dbReference type="InterPro" id="IPR035644">
    <property type="entry name" value="MraZ_C"/>
</dbReference>
<dbReference type="InterPro" id="IPR020603">
    <property type="entry name" value="MraZ_dom"/>
</dbReference>
<dbReference type="InterPro" id="IPR035642">
    <property type="entry name" value="MraZ_N"/>
</dbReference>
<dbReference type="InterPro" id="IPR038619">
    <property type="entry name" value="MraZ_sf"/>
</dbReference>
<dbReference type="InterPro" id="IPR007159">
    <property type="entry name" value="SpoVT-AbrB_dom"/>
</dbReference>
<dbReference type="InterPro" id="IPR037914">
    <property type="entry name" value="SpoVT-AbrB_sf"/>
</dbReference>
<dbReference type="NCBIfam" id="TIGR00242">
    <property type="entry name" value="division/cell wall cluster transcriptional repressor MraZ"/>
    <property type="match status" value="1"/>
</dbReference>
<dbReference type="PANTHER" id="PTHR34701">
    <property type="entry name" value="TRANSCRIPTIONAL REGULATOR MRAZ"/>
    <property type="match status" value="1"/>
</dbReference>
<dbReference type="PANTHER" id="PTHR34701:SF1">
    <property type="entry name" value="TRANSCRIPTIONAL REGULATOR MRAZ"/>
    <property type="match status" value="1"/>
</dbReference>
<dbReference type="Pfam" id="PF02381">
    <property type="entry name" value="MraZ"/>
    <property type="match status" value="2"/>
</dbReference>
<dbReference type="SUPFAM" id="SSF89447">
    <property type="entry name" value="AbrB/MazE/MraZ-like"/>
    <property type="match status" value="1"/>
</dbReference>
<dbReference type="PROSITE" id="PS51740">
    <property type="entry name" value="SPOVT_ABRB"/>
    <property type="match status" value="2"/>
</dbReference>
<accession>Q2FZ97</accession>
<name>MRAZ_STAA8</name>
<gene>
    <name evidence="1" type="primary">mraZ</name>
    <name type="ordered locus">SAOUHSC_01142</name>
</gene>
<feature type="chain" id="PRO_1000062944" description="Transcriptional regulator MraZ">
    <location>
        <begin position="1"/>
        <end position="143"/>
    </location>
</feature>
<feature type="domain" description="SpoVT-AbrB 1" evidence="2">
    <location>
        <begin position="5"/>
        <end position="47"/>
    </location>
</feature>
<feature type="domain" description="SpoVT-AbrB 2" evidence="2">
    <location>
        <begin position="76"/>
        <end position="119"/>
    </location>
</feature>
<evidence type="ECO:0000255" key="1">
    <source>
        <dbReference type="HAMAP-Rule" id="MF_01008"/>
    </source>
</evidence>
<evidence type="ECO:0000255" key="2">
    <source>
        <dbReference type="PROSITE-ProRule" id="PRU01076"/>
    </source>
</evidence>
<reference key="1">
    <citation type="book" date="2006" name="Gram positive pathogens, 2nd edition">
        <title>The Staphylococcus aureus NCTC 8325 genome.</title>
        <editorList>
            <person name="Fischetti V."/>
            <person name="Novick R."/>
            <person name="Ferretti J."/>
            <person name="Portnoy D."/>
            <person name="Rood J."/>
        </editorList>
        <authorList>
            <person name="Gillaspy A.F."/>
            <person name="Worrell V."/>
            <person name="Orvis J."/>
            <person name="Roe B.A."/>
            <person name="Dyer D.W."/>
            <person name="Iandolo J.J."/>
        </authorList>
    </citation>
    <scope>NUCLEOTIDE SEQUENCE [LARGE SCALE GENOMIC DNA]</scope>
    <source>
        <strain>NCTC 8325 / PS 47</strain>
    </source>
</reference>
<protein>
    <recommendedName>
        <fullName>Transcriptional regulator MraZ</fullName>
    </recommendedName>
</protein>
<comment type="subunit">
    <text evidence="1">Forms oligomers.</text>
</comment>
<comment type="subcellular location">
    <subcellularLocation>
        <location evidence="1">Cytoplasm</location>
        <location evidence="1">Nucleoid</location>
    </subcellularLocation>
</comment>
<comment type="similarity">
    <text evidence="1">Belongs to the MraZ family.</text>
</comment>
<keyword id="KW-0963">Cytoplasm</keyword>
<keyword id="KW-0238">DNA-binding</keyword>
<keyword id="KW-1185">Reference proteome</keyword>
<keyword id="KW-0677">Repeat</keyword>
<keyword id="KW-0804">Transcription</keyword>
<keyword id="KW-0805">Transcription regulation</keyword>